<accession>Q89VT6</accession>
<gene>
    <name type="ordered locus">bsr0959</name>
</gene>
<name>AACP1_BRADU</name>
<protein>
    <recommendedName>
        <fullName>Aminoacyl carrier protein 1</fullName>
    </recommendedName>
</protein>
<sequence length="90" mass="9939">MQAFNTDVRNRIIKLVKGILEQNALAADVTPQAKLVDVGLTSMDMVNLMLGVEAEFDFTIPQSEITPENFQSVETLERMVMTQLQPATAA</sequence>
<evidence type="ECO:0000255" key="1">
    <source>
        <dbReference type="PROSITE-ProRule" id="PRU00258"/>
    </source>
</evidence>
<evidence type="ECO:0000269" key="2">
    <source>
    </source>
</evidence>
<evidence type="ECO:0007829" key="3">
    <source>
        <dbReference type="PDB" id="4H2S"/>
    </source>
</evidence>
<evidence type="ECO:0007829" key="4">
    <source>
        <dbReference type="PDB" id="4H2T"/>
    </source>
</evidence>
<evidence type="ECO:0007829" key="5">
    <source>
        <dbReference type="PDB" id="4H2U"/>
    </source>
</evidence>
<evidence type="ECO:0007829" key="6">
    <source>
        <dbReference type="PDB" id="4H2V"/>
    </source>
</evidence>
<organism>
    <name type="scientific">Bradyrhizobium diazoefficiens (strain JCM 10833 / BCRC 13528 / IAM 13628 / NBRC 14792 / USDA 110)</name>
    <dbReference type="NCBI Taxonomy" id="224911"/>
    <lineage>
        <taxon>Bacteria</taxon>
        <taxon>Pseudomonadati</taxon>
        <taxon>Pseudomonadota</taxon>
        <taxon>Alphaproteobacteria</taxon>
        <taxon>Hyphomicrobiales</taxon>
        <taxon>Nitrobacteraceae</taxon>
        <taxon>Bradyrhizobium</taxon>
    </lineage>
</organism>
<keyword id="KW-0002">3D-structure</keyword>
<keyword id="KW-0596">Phosphopantetheine</keyword>
<keyword id="KW-0597">Phosphoprotein</keyword>
<keyword id="KW-1185">Reference proteome</keyword>
<dbReference type="EMBL" id="BA000040">
    <property type="protein sequence ID" value="BAC46224.1"/>
    <property type="molecule type" value="Genomic_DNA"/>
</dbReference>
<dbReference type="RefSeq" id="NP_767599.1">
    <property type="nucleotide sequence ID" value="NC_004463.1"/>
</dbReference>
<dbReference type="RefSeq" id="WP_011083780.1">
    <property type="nucleotide sequence ID" value="NC_004463.1"/>
</dbReference>
<dbReference type="PDB" id="4H2S">
    <property type="method" value="X-ray"/>
    <property type="resolution" value="2.15 A"/>
    <property type="chains" value="C/D=1-90"/>
</dbReference>
<dbReference type="PDB" id="4H2T">
    <property type="method" value="X-ray"/>
    <property type="resolution" value="2.44 A"/>
    <property type="chains" value="C/D=1-90"/>
</dbReference>
<dbReference type="PDB" id="4H2U">
    <property type="method" value="X-ray"/>
    <property type="resolution" value="2.10 A"/>
    <property type="chains" value="C/D=1-90"/>
</dbReference>
<dbReference type="PDB" id="4H2V">
    <property type="method" value="X-ray"/>
    <property type="resolution" value="2.00 A"/>
    <property type="chains" value="C/D=1-90"/>
</dbReference>
<dbReference type="PDBsum" id="4H2S"/>
<dbReference type="PDBsum" id="4H2T"/>
<dbReference type="PDBsum" id="4H2U"/>
<dbReference type="PDBsum" id="4H2V"/>
<dbReference type="SMR" id="Q89VT6"/>
<dbReference type="DIP" id="DIP-60152N"/>
<dbReference type="IntAct" id="Q89VT6">
    <property type="interactions" value="2"/>
</dbReference>
<dbReference type="STRING" id="224911.AAV28_01635"/>
<dbReference type="EnsemblBacteria" id="BAC46224">
    <property type="protein sequence ID" value="BAC46224"/>
    <property type="gene ID" value="BAC46224"/>
</dbReference>
<dbReference type="GeneID" id="46488228"/>
<dbReference type="KEGG" id="bja:bsr0959"/>
<dbReference type="PATRIC" id="fig|224911.44.peg.347"/>
<dbReference type="eggNOG" id="COG0236">
    <property type="taxonomic scope" value="Bacteria"/>
</dbReference>
<dbReference type="HOGENOM" id="CLU_2435073_0_0_5"/>
<dbReference type="InParanoid" id="Q89VT6"/>
<dbReference type="OrthoDB" id="8250336at2"/>
<dbReference type="PhylomeDB" id="Q89VT6"/>
<dbReference type="Proteomes" id="UP000002526">
    <property type="component" value="Chromosome"/>
</dbReference>
<dbReference type="GO" id="GO:0005829">
    <property type="term" value="C:cytosol"/>
    <property type="evidence" value="ECO:0000318"/>
    <property type="project" value="GO_Central"/>
</dbReference>
<dbReference type="GO" id="GO:0016020">
    <property type="term" value="C:membrane"/>
    <property type="evidence" value="ECO:0007669"/>
    <property type="project" value="GOC"/>
</dbReference>
<dbReference type="GO" id="GO:0000035">
    <property type="term" value="F:acyl binding"/>
    <property type="evidence" value="ECO:0000318"/>
    <property type="project" value="GO_Central"/>
</dbReference>
<dbReference type="GO" id="GO:0000036">
    <property type="term" value="F:acyl carrier activity"/>
    <property type="evidence" value="ECO:0000318"/>
    <property type="project" value="GO_Central"/>
</dbReference>
<dbReference type="GO" id="GO:0009245">
    <property type="term" value="P:lipid A biosynthetic process"/>
    <property type="evidence" value="ECO:0000318"/>
    <property type="project" value="GO_Central"/>
</dbReference>
<dbReference type="Gene3D" id="1.10.1200.10">
    <property type="entry name" value="ACP-like"/>
    <property type="match status" value="1"/>
</dbReference>
<dbReference type="InterPro" id="IPR036736">
    <property type="entry name" value="ACP-like_sf"/>
</dbReference>
<dbReference type="InterPro" id="IPR009081">
    <property type="entry name" value="PP-bd_ACP"/>
</dbReference>
<dbReference type="Pfam" id="PF00550">
    <property type="entry name" value="PP-binding"/>
    <property type="match status" value="1"/>
</dbReference>
<dbReference type="SUPFAM" id="SSF47336">
    <property type="entry name" value="ACP-like"/>
    <property type="match status" value="1"/>
</dbReference>
<dbReference type="PROSITE" id="PS50075">
    <property type="entry name" value="CARRIER"/>
    <property type="match status" value="1"/>
</dbReference>
<comment type="function">
    <text evidence="2">Aminoacyl carrier protein. Can be charged with L-glycine via the formation of a thioester bond between the amino acid and the 4'-phosphopantetheinyl prosthetic group, catalyzed by the bll0957 ligase.</text>
</comment>
<comment type="interaction">
    <interactant intactId="EBI-16043178">
        <id>Q89VT6</id>
    </interactant>
    <interactant intactId="EBI-16043152">
        <id>Q89VT8</id>
        <label>bll0957</label>
    </interactant>
    <organismsDiffer>false</organismsDiffer>
    <experiments>4</experiments>
</comment>
<comment type="interaction">
    <interactant intactId="EBI-16043178">
        <id>Q89VT6</id>
    </interactant>
    <interactant intactId="EBI-16043272">
        <id>Q7CWR3</id>
        <label>Atu2573</label>
    </interactant>
    <organismsDiffer>true</organismsDiffer>
    <experiments>2</experiments>
</comment>
<comment type="PTM">
    <text evidence="2">4'-phosphopantetheine is transferred from CoA to a specific serine of the apo-form of this carrier protein.</text>
</comment>
<reference key="1">
    <citation type="journal article" date="2002" name="DNA Res.">
        <title>Complete genomic sequence of nitrogen-fixing symbiotic bacterium Bradyrhizobium japonicum USDA110.</title>
        <authorList>
            <person name="Kaneko T."/>
            <person name="Nakamura Y."/>
            <person name="Sato S."/>
            <person name="Minamisawa K."/>
            <person name="Uchiumi T."/>
            <person name="Sasamoto S."/>
            <person name="Watanabe A."/>
            <person name="Idesawa K."/>
            <person name="Iriguchi M."/>
            <person name="Kawashima K."/>
            <person name="Kohara M."/>
            <person name="Matsumoto M."/>
            <person name="Shimpo S."/>
            <person name="Tsuruoka H."/>
            <person name="Wada T."/>
            <person name="Yamada M."/>
            <person name="Tabata S."/>
        </authorList>
    </citation>
    <scope>NUCLEOTIDE SEQUENCE [LARGE SCALE GENOMIC DNA]</scope>
    <source>
        <strain>JCM 10833 / BCRC 13528 / IAM 13628 / NBRC 14792 / USDA 110</strain>
    </source>
</reference>
<reference key="2">
    <citation type="journal article" date="2010" name="Proc. Natl. Acad. Sci. U.S.A.">
        <title>Homologs of aminoacyl-tRNA synthetases acylate carrier proteins and provide a link between ribosomal and nonribosomal peptide synthesis.</title>
        <authorList>
            <person name="Mocibob M."/>
            <person name="Ivic N."/>
            <person name="Bilokapic S."/>
            <person name="Maier T."/>
            <person name="Luic M."/>
            <person name="Ban N."/>
            <person name="Weygand-Durasevic I."/>
        </authorList>
    </citation>
    <scope>FUNCTION AS A CARRIER PROTEIN</scope>
    <scope>PHOSPHOPANTETHEINYLATION</scope>
    <scope>IDENTIFICATION BY MASS SPECTROMETRY</scope>
    <source>
        <strain>JCM 10833 / BCRC 13528 / IAM 13628 / NBRC 14792 / USDA 110</strain>
    </source>
</reference>
<feature type="chain" id="PRO_0000401189" description="Aminoacyl carrier protein 1">
    <location>
        <begin position="1"/>
        <end position="90"/>
    </location>
</feature>
<feature type="domain" description="Carrier" evidence="1">
    <location>
        <begin position="6"/>
        <end position="84"/>
    </location>
</feature>
<feature type="modified residue" description="O-(pantetheine 4'-phosphoryl)serine" evidence="1">
    <location>
        <position position="42"/>
    </location>
</feature>
<feature type="helix" evidence="6">
    <location>
        <begin position="8"/>
        <end position="21"/>
    </location>
</feature>
<feature type="turn" evidence="5">
    <location>
        <begin position="22"/>
        <end position="24"/>
    </location>
</feature>
<feature type="strand" evidence="3">
    <location>
        <begin position="31"/>
        <end position="33"/>
    </location>
</feature>
<feature type="turn" evidence="6">
    <location>
        <begin position="35"/>
        <end position="37"/>
    </location>
</feature>
<feature type="helix" evidence="6">
    <location>
        <begin position="42"/>
        <end position="49"/>
    </location>
</feature>
<feature type="helix" evidence="4">
    <location>
        <begin position="67"/>
        <end position="70"/>
    </location>
</feature>
<feature type="helix" evidence="6">
    <location>
        <begin position="73"/>
        <end position="77"/>
    </location>
</feature>
<proteinExistence type="evidence at protein level"/>